<keyword id="KW-0249">Electron transport</keyword>
<keyword id="KW-0349">Heme</keyword>
<keyword id="KW-0408">Iron</keyword>
<keyword id="KW-0472">Membrane</keyword>
<keyword id="KW-0479">Metal-binding</keyword>
<keyword id="KW-0496">Mitochondrion</keyword>
<keyword id="KW-0999">Mitochondrion inner membrane</keyword>
<keyword id="KW-0679">Respiratory chain</keyword>
<keyword id="KW-0812">Transmembrane</keyword>
<keyword id="KW-1133">Transmembrane helix</keyword>
<keyword id="KW-0813">Transport</keyword>
<keyword id="KW-0830">Ubiquinone</keyword>
<accession>Q94WQ8</accession>
<reference key="1">
    <citation type="journal article" date="2001" name="Mol. Biol. Evol.">
        <title>The complete sequence of the mitochondrial genome of Buteo buteo (Aves, Accipitridae) indicates an early split in the phylogeny of raptors.</title>
        <authorList>
            <person name="Haring E."/>
            <person name="Kruckenhauser L."/>
            <person name="Gamauf A."/>
            <person name="Riesing M.J."/>
            <person name="Pinsker W."/>
        </authorList>
    </citation>
    <scope>NUCLEOTIDE SEQUENCE [GENOMIC DNA]</scope>
</reference>
<proteinExistence type="inferred from homology"/>
<evidence type="ECO:0000250" key="1"/>
<evidence type="ECO:0000250" key="2">
    <source>
        <dbReference type="UniProtKB" id="P00157"/>
    </source>
</evidence>
<evidence type="ECO:0000255" key="3">
    <source>
        <dbReference type="PROSITE-ProRule" id="PRU00967"/>
    </source>
</evidence>
<evidence type="ECO:0000255" key="4">
    <source>
        <dbReference type="PROSITE-ProRule" id="PRU00968"/>
    </source>
</evidence>
<comment type="function">
    <text evidence="2">Component of the ubiquinol-cytochrome c reductase complex (complex III or cytochrome b-c1 complex) that is part of the mitochondrial respiratory chain. The b-c1 complex mediates electron transfer from ubiquinol to cytochrome c. Contributes to the generation of a proton gradient across the mitochondrial membrane that is then used for ATP synthesis.</text>
</comment>
<comment type="cofactor">
    <cofactor evidence="2">
        <name>heme b</name>
        <dbReference type="ChEBI" id="CHEBI:60344"/>
    </cofactor>
    <text evidence="2">Binds 2 heme b groups non-covalently.</text>
</comment>
<comment type="subunit">
    <text evidence="2">The cytochrome bc1 complex contains 11 subunits: 3 respiratory subunits (MT-CYB, CYC1 and UQCRFS1), 2 core proteins (UQCRC1 and UQCRC2) and 6 low-molecular weight proteins (UQCRH/QCR6, UQCRB/QCR7, UQCRQ/QCR8, UQCR10/QCR9, UQCR11/QCR10 and a cleavage product of UQCRFS1). This cytochrome bc1 complex then forms a dimer.</text>
</comment>
<comment type="subcellular location">
    <subcellularLocation>
        <location evidence="2">Mitochondrion inner membrane</location>
        <topology evidence="2">Multi-pass membrane protein</topology>
    </subcellularLocation>
</comment>
<comment type="miscellaneous">
    <text evidence="1">Heme 1 (or BL or b562) is low-potential and absorbs at about 562 nm, and heme 2 (or BH or b566) is high-potential and absorbs at about 566 nm.</text>
</comment>
<comment type="similarity">
    <text evidence="3 4">Belongs to the cytochrome b family.</text>
</comment>
<comment type="caution">
    <text evidence="2">The full-length protein contains only eight transmembrane helices, not nine as predicted by bioinformatics tools.</text>
</comment>
<organism>
    <name type="scientific">Buteo buteo</name>
    <name type="common">Eurasian buzzard</name>
    <dbReference type="NCBI Taxonomy" id="30397"/>
    <lineage>
        <taxon>Eukaryota</taxon>
        <taxon>Metazoa</taxon>
        <taxon>Chordata</taxon>
        <taxon>Craniata</taxon>
        <taxon>Vertebrata</taxon>
        <taxon>Euteleostomi</taxon>
        <taxon>Archelosauria</taxon>
        <taxon>Archosauria</taxon>
        <taxon>Dinosauria</taxon>
        <taxon>Saurischia</taxon>
        <taxon>Theropoda</taxon>
        <taxon>Coelurosauria</taxon>
        <taxon>Aves</taxon>
        <taxon>Neognathae</taxon>
        <taxon>Neoaves</taxon>
        <taxon>Telluraves</taxon>
        <taxon>Accipitrimorphae</taxon>
        <taxon>Accipitriformes</taxon>
        <taxon>Accipitridae</taxon>
        <taxon>Accipitrinae</taxon>
        <taxon>Buteo</taxon>
    </lineage>
</organism>
<feature type="chain" id="PRO_0000060701" description="Cytochrome b">
    <location>
        <begin position="1"/>
        <end position="380"/>
    </location>
</feature>
<feature type="transmembrane region" description="Helical" evidence="2">
    <location>
        <begin position="34"/>
        <end position="54"/>
    </location>
</feature>
<feature type="transmembrane region" description="Helical" evidence="2">
    <location>
        <begin position="78"/>
        <end position="99"/>
    </location>
</feature>
<feature type="transmembrane region" description="Helical" evidence="2">
    <location>
        <begin position="114"/>
        <end position="134"/>
    </location>
</feature>
<feature type="transmembrane region" description="Helical" evidence="2">
    <location>
        <begin position="179"/>
        <end position="199"/>
    </location>
</feature>
<feature type="transmembrane region" description="Helical" evidence="2">
    <location>
        <begin position="227"/>
        <end position="247"/>
    </location>
</feature>
<feature type="transmembrane region" description="Helical" evidence="2">
    <location>
        <begin position="289"/>
        <end position="309"/>
    </location>
</feature>
<feature type="transmembrane region" description="Helical" evidence="2">
    <location>
        <begin position="321"/>
        <end position="341"/>
    </location>
</feature>
<feature type="transmembrane region" description="Helical" evidence="2">
    <location>
        <begin position="348"/>
        <end position="368"/>
    </location>
</feature>
<feature type="binding site" description="axial binding residue" evidence="2">
    <location>
        <position position="84"/>
    </location>
    <ligand>
        <name>heme b</name>
        <dbReference type="ChEBI" id="CHEBI:60344"/>
        <label>b562</label>
    </ligand>
    <ligandPart>
        <name>Fe</name>
        <dbReference type="ChEBI" id="CHEBI:18248"/>
    </ligandPart>
</feature>
<feature type="binding site" description="axial binding residue" evidence="2">
    <location>
        <position position="98"/>
    </location>
    <ligand>
        <name>heme b</name>
        <dbReference type="ChEBI" id="CHEBI:60344"/>
        <label>b566</label>
    </ligand>
    <ligandPart>
        <name>Fe</name>
        <dbReference type="ChEBI" id="CHEBI:18248"/>
    </ligandPart>
</feature>
<feature type="binding site" description="axial binding residue" evidence="2">
    <location>
        <position position="183"/>
    </location>
    <ligand>
        <name>heme b</name>
        <dbReference type="ChEBI" id="CHEBI:60344"/>
        <label>b562</label>
    </ligand>
    <ligandPart>
        <name>Fe</name>
        <dbReference type="ChEBI" id="CHEBI:18248"/>
    </ligandPart>
</feature>
<feature type="binding site" description="axial binding residue" evidence="2">
    <location>
        <position position="197"/>
    </location>
    <ligand>
        <name>heme b</name>
        <dbReference type="ChEBI" id="CHEBI:60344"/>
        <label>b566</label>
    </ligand>
    <ligandPart>
        <name>Fe</name>
        <dbReference type="ChEBI" id="CHEBI:18248"/>
    </ligandPart>
</feature>
<feature type="binding site" evidence="2">
    <location>
        <position position="202"/>
    </location>
    <ligand>
        <name>a ubiquinone</name>
        <dbReference type="ChEBI" id="CHEBI:16389"/>
    </ligand>
</feature>
<sequence>MAPNPRKSHPLLKMINNSLIDLPTPSNISIWWNFGSLLGICLLTQIMTGLLLATHYTADTTLAFSSVAHTCRNVQYGWLIRNLHANGASFFFICIYLHIGRGLYYGSYLYKETWNTGIILLLTLMATAFVGYVLPWGQMSFWGATVITNLFSAIPYIGQTIVEWAWGGFSVDNPTLTRFFALHFLLPFLIAGLTLIHLTFLHESGSNNPLGIISNCDKIPFHPYFSLKDILGFMLMLLPLTTLALFSPNLLGDPENFTPANPLTTPPHIKPEWYFLFAYAILRSIPNKLGGVLALAASVLILFLIPFLHKSKQRTMTFRPISQLLFWTLVANLLILTWIGSQPVEHPFIIIGQLASLTYFLILLALFPLTGALENKLLNH</sequence>
<dbReference type="EMBL" id="AF380305">
    <property type="protein sequence ID" value="AAL11092.1"/>
    <property type="molecule type" value="Genomic_DNA"/>
</dbReference>
<dbReference type="RefSeq" id="NP_387496.1">
    <property type="nucleotide sequence ID" value="NC_003128.3"/>
</dbReference>
<dbReference type="SMR" id="Q94WQ8"/>
<dbReference type="GeneID" id="803923"/>
<dbReference type="CTD" id="4519"/>
<dbReference type="GO" id="GO:0005743">
    <property type="term" value="C:mitochondrial inner membrane"/>
    <property type="evidence" value="ECO:0007669"/>
    <property type="project" value="UniProtKB-SubCell"/>
</dbReference>
<dbReference type="GO" id="GO:0045275">
    <property type="term" value="C:respiratory chain complex III"/>
    <property type="evidence" value="ECO:0007669"/>
    <property type="project" value="InterPro"/>
</dbReference>
<dbReference type="GO" id="GO:0046872">
    <property type="term" value="F:metal ion binding"/>
    <property type="evidence" value="ECO:0007669"/>
    <property type="project" value="UniProtKB-KW"/>
</dbReference>
<dbReference type="GO" id="GO:0008121">
    <property type="term" value="F:ubiquinol-cytochrome-c reductase activity"/>
    <property type="evidence" value="ECO:0007669"/>
    <property type="project" value="InterPro"/>
</dbReference>
<dbReference type="GO" id="GO:0006122">
    <property type="term" value="P:mitochondrial electron transport, ubiquinol to cytochrome c"/>
    <property type="evidence" value="ECO:0007669"/>
    <property type="project" value="TreeGrafter"/>
</dbReference>
<dbReference type="CDD" id="cd00290">
    <property type="entry name" value="cytochrome_b_C"/>
    <property type="match status" value="1"/>
</dbReference>
<dbReference type="CDD" id="cd00284">
    <property type="entry name" value="Cytochrome_b_N"/>
    <property type="match status" value="1"/>
</dbReference>
<dbReference type="FunFam" id="1.20.810.10:FF:000002">
    <property type="entry name" value="Cytochrome b"/>
    <property type="match status" value="1"/>
</dbReference>
<dbReference type="Gene3D" id="1.20.810.10">
    <property type="entry name" value="Cytochrome Bc1 Complex, Chain C"/>
    <property type="match status" value="1"/>
</dbReference>
<dbReference type="InterPro" id="IPR005798">
    <property type="entry name" value="Cyt_b/b6_C"/>
</dbReference>
<dbReference type="InterPro" id="IPR036150">
    <property type="entry name" value="Cyt_b/b6_C_sf"/>
</dbReference>
<dbReference type="InterPro" id="IPR005797">
    <property type="entry name" value="Cyt_b/b6_N"/>
</dbReference>
<dbReference type="InterPro" id="IPR027387">
    <property type="entry name" value="Cytb/b6-like_sf"/>
</dbReference>
<dbReference type="InterPro" id="IPR030689">
    <property type="entry name" value="Cytochrome_b"/>
</dbReference>
<dbReference type="InterPro" id="IPR048260">
    <property type="entry name" value="Cytochrome_b_C_euk/bac"/>
</dbReference>
<dbReference type="InterPro" id="IPR048259">
    <property type="entry name" value="Cytochrome_b_N_euk/bac"/>
</dbReference>
<dbReference type="InterPro" id="IPR016174">
    <property type="entry name" value="Di-haem_cyt_TM"/>
</dbReference>
<dbReference type="PANTHER" id="PTHR19271">
    <property type="entry name" value="CYTOCHROME B"/>
    <property type="match status" value="1"/>
</dbReference>
<dbReference type="PANTHER" id="PTHR19271:SF16">
    <property type="entry name" value="CYTOCHROME B"/>
    <property type="match status" value="1"/>
</dbReference>
<dbReference type="Pfam" id="PF00032">
    <property type="entry name" value="Cytochrom_B_C"/>
    <property type="match status" value="1"/>
</dbReference>
<dbReference type="Pfam" id="PF00033">
    <property type="entry name" value="Cytochrome_B"/>
    <property type="match status" value="1"/>
</dbReference>
<dbReference type="PIRSF" id="PIRSF038885">
    <property type="entry name" value="COB"/>
    <property type="match status" value="1"/>
</dbReference>
<dbReference type="SUPFAM" id="SSF81648">
    <property type="entry name" value="a domain/subunit of cytochrome bc1 complex (Ubiquinol-cytochrome c reductase)"/>
    <property type="match status" value="1"/>
</dbReference>
<dbReference type="SUPFAM" id="SSF81342">
    <property type="entry name" value="Transmembrane di-heme cytochromes"/>
    <property type="match status" value="1"/>
</dbReference>
<dbReference type="PROSITE" id="PS51003">
    <property type="entry name" value="CYTB_CTER"/>
    <property type="match status" value="1"/>
</dbReference>
<dbReference type="PROSITE" id="PS51002">
    <property type="entry name" value="CYTB_NTER"/>
    <property type="match status" value="1"/>
</dbReference>
<geneLocation type="mitochondrion"/>
<protein>
    <recommendedName>
        <fullName>Cytochrome b</fullName>
    </recommendedName>
    <alternativeName>
        <fullName>Complex III subunit 3</fullName>
    </alternativeName>
    <alternativeName>
        <fullName>Complex III subunit III</fullName>
    </alternativeName>
    <alternativeName>
        <fullName>Cytochrome b-c1 complex subunit 3</fullName>
    </alternativeName>
    <alternativeName>
        <fullName>Ubiquinol-cytochrome-c reductase complex cytochrome b subunit</fullName>
    </alternativeName>
</protein>
<name>CYB_BUTBU</name>
<gene>
    <name type="primary">MT-CYB</name>
    <name type="synonym">COB</name>
    <name type="synonym">CYTB</name>
    <name type="synonym">MTCYB</name>
</gene>